<reference key="1">
    <citation type="journal article" date="2009" name="BMC Genomics">
        <title>Evidence for niche adaptation in the genome of the bovine pathogen Streptococcus uberis.</title>
        <authorList>
            <person name="Ward P.N."/>
            <person name="Holden M.T.G."/>
            <person name="Leigh J.A."/>
            <person name="Lennard N."/>
            <person name="Bignell A."/>
            <person name="Barron A."/>
            <person name="Clark L."/>
            <person name="Quail M.A."/>
            <person name="Woodward J."/>
            <person name="Barrell B.G."/>
            <person name="Egan S.A."/>
            <person name="Field T.R."/>
            <person name="Maskell D."/>
            <person name="Kehoe M."/>
            <person name="Dowson C.G."/>
            <person name="Chanter N."/>
            <person name="Whatmore A.M."/>
            <person name="Bentley S.D."/>
            <person name="Parkhill J."/>
        </authorList>
    </citation>
    <scope>NUCLEOTIDE SEQUENCE [LARGE SCALE GENOMIC DNA]</scope>
    <source>
        <strain>ATCC BAA-854 / 0140J</strain>
    </source>
</reference>
<name>DNLJ_STRU0</name>
<comment type="function">
    <text evidence="1">DNA ligase that catalyzes the formation of phosphodiester linkages between 5'-phosphoryl and 3'-hydroxyl groups in double-stranded DNA using NAD as a coenzyme and as the energy source for the reaction. It is essential for DNA replication and repair of damaged DNA.</text>
</comment>
<comment type="catalytic activity">
    <reaction evidence="1">
        <text>NAD(+) + (deoxyribonucleotide)n-3'-hydroxyl + 5'-phospho-(deoxyribonucleotide)m = (deoxyribonucleotide)n+m + AMP + beta-nicotinamide D-nucleotide.</text>
        <dbReference type="EC" id="6.5.1.2"/>
    </reaction>
</comment>
<comment type="cofactor">
    <cofactor evidence="1">
        <name>Mg(2+)</name>
        <dbReference type="ChEBI" id="CHEBI:18420"/>
    </cofactor>
    <cofactor evidence="1">
        <name>Mn(2+)</name>
        <dbReference type="ChEBI" id="CHEBI:29035"/>
    </cofactor>
</comment>
<comment type="similarity">
    <text evidence="1">Belongs to the NAD-dependent DNA ligase family. LigA subfamily.</text>
</comment>
<accession>B9DRS2</accession>
<feature type="chain" id="PRO_0000380485" description="DNA ligase">
    <location>
        <begin position="1"/>
        <end position="652"/>
    </location>
</feature>
<feature type="domain" description="BRCT" evidence="1">
    <location>
        <begin position="577"/>
        <end position="652"/>
    </location>
</feature>
<feature type="active site" description="N6-AMP-lysine intermediate" evidence="1">
    <location>
        <position position="109"/>
    </location>
</feature>
<feature type="binding site" evidence="1">
    <location>
        <begin position="29"/>
        <end position="33"/>
    </location>
    <ligand>
        <name>NAD(+)</name>
        <dbReference type="ChEBI" id="CHEBI:57540"/>
    </ligand>
</feature>
<feature type="binding site" evidence="1">
    <location>
        <begin position="78"/>
        <end position="79"/>
    </location>
    <ligand>
        <name>NAD(+)</name>
        <dbReference type="ChEBI" id="CHEBI:57540"/>
    </ligand>
</feature>
<feature type="binding site" evidence="1">
    <location>
        <position position="107"/>
    </location>
    <ligand>
        <name>NAD(+)</name>
        <dbReference type="ChEBI" id="CHEBI:57540"/>
    </ligand>
</feature>
<feature type="binding site" evidence="1">
    <location>
        <position position="130"/>
    </location>
    <ligand>
        <name>NAD(+)</name>
        <dbReference type="ChEBI" id="CHEBI:57540"/>
    </ligand>
</feature>
<feature type="binding site" evidence="1">
    <location>
        <position position="164"/>
    </location>
    <ligand>
        <name>NAD(+)</name>
        <dbReference type="ChEBI" id="CHEBI:57540"/>
    </ligand>
</feature>
<feature type="binding site" evidence="1">
    <location>
        <position position="278"/>
    </location>
    <ligand>
        <name>NAD(+)</name>
        <dbReference type="ChEBI" id="CHEBI:57540"/>
    </ligand>
</feature>
<feature type="binding site" evidence="1">
    <location>
        <position position="302"/>
    </location>
    <ligand>
        <name>NAD(+)</name>
        <dbReference type="ChEBI" id="CHEBI:57540"/>
    </ligand>
</feature>
<feature type="binding site" evidence="1">
    <location>
        <position position="395"/>
    </location>
    <ligand>
        <name>Zn(2+)</name>
        <dbReference type="ChEBI" id="CHEBI:29105"/>
    </ligand>
</feature>
<feature type="binding site" evidence="1">
    <location>
        <position position="398"/>
    </location>
    <ligand>
        <name>Zn(2+)</name>
        <dbReference type="ChEBI" id="CHEBI:29105"/>
    </ligand>
</feature>
<feature type="binding site" evidence="1">
    <location>
        <position position="413"/>
    </location>
    <ligand>
        <name>Zn(2+)</name>
        <dbReference type="ChEBI" id="CHEBI:29105"/>
    </ligand>
</feature>
<feature type="binding site" evidence="1">
    <location>
        <position position="418"/>
    </location>
    <ligand>
        <name>Zn(2+)</name>
        <dbReference type="ChEBI" id="CHEBI:29105"/>
    </ligand>
</feature>
<protein>
    <recommendedName>
        <fullName evidence="1">DNA ligase</fullName>
        <ecNumber evidence="1">6.5.1.2</ecNumber>
    </recommendedName>
    <alternativeName>
        <fullName evidence="1">Polydeoxyribonucleotide synthase [NAD(+)]</fullName>
    </alternativeName>
</protein>
<organism>
    <name type="scientific">Streptococcus uberis (strain ATCC BAA-854 / 0140J)</name>
    <dbReference type="NCBI Taxonomy" id="218495"/>
    <lineage>
        <taxon>Bacteria</taxon>
        <taxon>Bacillati</taxon>
        <taxon>Bacillota</taxon>
        <taxon>Bacilli</taxon>
        <taxon>Lactobacillales</taxon>
        <taxon>Streptococcaceae</taxon>
        <taxon>Streptococcus</taxon>
    </lineage>
</organism>
<keyword id="KW-0227">DNA damage</keyword>
<keyword id="KW-0234">DNA repair</keyword>
<keyword id="KW-0235">DNA replication</keyword>
<keyword id="KW-0436">Ligase</keyword>
<keyword id="KW-0460">Magnesium</keyword>
<keyword id="KW-0464">Manganese</keyword>
<keyword id="KW-0479">Metal-binding</keyword>
<keyword id="KW-0520">NAD</keyword>
<keyword id="KW-1185">Reference proteome</keyword>
<keyword id="KW-0862">Zinc</keyword>
<sequence length="652" mass="72600">MEKRIRELTSLLNQYRQEYYTNDNPSVSDQEYDKLYHELIDLEKEYPEYIQKDSPSQAVGGLILSGFEKYQHPFPLYSLQDAFSKEELEAFDRRVKSEFPKAEYIAELKIDGLSISLSYESGRLVTGATRGDGSVGENITENIKKIKDIPHQLKDDITITVRGEAYMSRSSFQKINLERQENGETEFANPRNAAAGTLRQLDTSIVARRELASFLYQEASPSQAQNQEDVLENLEALGFSVNKKRLISSSMEDIWSFITQVEDERDNLSYDIDGIVIKVNNLAMQEELGFTIKAPRWAIAYKFPAEEKEAEILSVDWTIGRTGVVTPTANLTPIQLAGTTVSRATLHNVDYIAEKDIRIGDTVIVYKAGDIIPAVLRVVDTKRDQQLPMPIPKVCPSCQSDLVHLEAEVALRCINPLCPSLIQRSLEHFASRNAMNIAGLGPAIVEKLFSAQLIHDVADIYQLSLDSLLTLEGIKEKSAQKLLDAIQSSKSNSADKLLFGLGIRHVGAKASRLLLETFGSVENLMKADDQSIAQIDGLGHVIANSIKNYFAKEEAKQLIFELKDKGVNLDYLGKKVDTSAQLFGLTVVLTGKLEEMTRQEAKEKLENMGAKVTGSVSKKTDLVIAGSDAGSKLDKARSLGIDVKDENWLLQL</sequence>
<evidence type="ECO:0000255" key="1">
    <source>
        <dbReference type="HAMAP-Rule" id="MF_01588"/>
    </source>
</evidence>
<gene>
    <name evidence="1" type="primary">ligA</name>
    <name type="ordered locus">SUB0658</name>
</gene>
<proteinExistence type="inferred from homology"/>
<dbReference type="EC" id="6.5.1.2" evidence="1"/>
<dbReference type="EMBL" id="AM946015">
    <property type="protein sequence ID" value="CAR41520.1"/>
    <property type="molecule type" value="Genomic_DNA"/>
</dbReference>
<dbReference type="RefSeq" id="WP_012658176.1">
    <property type="nucleotide sequence ID" value="NC_012004.1"/>
</dbReference>
<dbReference type="SMR" id="B9DRS2"/>
<dbReference type="STRING" id="218495.SUB0658"/>
<dbReference type="KEGG" id="sub:SUB0658"/>
<dbReference type="eggNOG" id="COG0272">
    <property type="taxonomic scope" value="Bacteria"/>
</dbReference>
<dbReference type="HOGENOM" id="CLU_007764_2_1_9"/>
<dbReference type="OrthoDB" id="9759736at2"/>
<dbReference type="Proteomes" id="UP000000449">
    <property type="component" value="Chromosome"/>
</dbReference>
<dbReference type="GO" id="GO:0005829">
    <property type="term" value="C:cytosol"/>
    <property type="evidence" value="ECO:0007669"/>
    <property type="project" value="TreeGrafter"/>
</dbReference>
<dbReference type="GO" id="GO:0003677">
    <property type="term" value="F:DNA binding"/>
    <property type="evidence" value="ECO:0007669"/>
    <property type="project" value="InterPro"/>
</dbReference>
<dbReference type="GO" id="GO:0003911">
    <property type="term" value="F:DNA ligase (NAD+) activity"/>
    <property type="evidence" value="ECO:0007669"/>
    <property type="project" value="UniProtKB-UniRule"/>
</dbReference>
<dbReference type="GO" id="GO:0046872">
    <property type="term" value="F:metal ion binding"/>
    <property type="evidence" value="ECO:0007669"/>
    <property type="project" value="UniProtKB-KW"/>
</dbReference>
<dbReference type="GO" id="GO:0006281">
    <property type="term" value="P:DNA repair"/>
    <property type="evidence" value="ECO:0007669"/>
    <property type="project" value="UniProtKB-KW"/>
</dbReference>
<dbReference type="GO" id="GO:0006260">
    <property type="term" value="P:DNA replication"/>
    <property type="evidence" value="ECO:0007669"/>
    <property type="project" value="UniProtKB-KW"/>
</dbReference>
<dbReference type="CDD" id="cd17748">
    <property type="entry name" value="BRCT_DNA_ligase_like"/>
    <property type="match status" value="1"/>
</dbReference>
<dbReference type="CDD" id="cd00114">
    <property type="entry name" value="LIGANc"/>
    <property type="match status" value="1"/>
</dbReference>
<dbReference type="FunFam" id="1.10.150.20:FF:000006">
    <property type="entry name" value="DNA ligase"/>
    <property type="match status" value="1"/>
</dbReference>
<dbReference type="FunFam" id="1.10.150.20:FF:000007">
    <property type="entry name" value="DNA ligase"/>
    <property type="match status" value="1"/>
</dbReference>
<dbReference type="FunFam" id="2.40.50.140:FF:000012">
    <property type="entry name" value="DNA ligase"/>
    <property type="match status" value="1"/>
</dbReference>
<dbReference type="FunFam" id="3.30.470.30:FF:000001">
    <property type="entry name" value="DNA ligase"/>
    <property type="match status" value="1"/>
</dbReference>
<dbReference type="Gene3D" id="6.20.10.30">
    <property type="match status" value="1"/>
</dbReference>
<dbReference type="Gene3D" id="1.10.150.20">
    <property type="entry name" value="5' to 3' exonuclease, C-terminal subdomain"/>
    <property type="match status" value="2"/>
</dbReference>
<dbReference type="Gene3D" id="3.40.50.10190">
    <property type="entry name" value="BRCT domain"/>
    <property type="match status" value="1"/>
</dbReference>
<dbReference type="Gene3D" id="3.30.470.30">
    <property type="entry name" value="DNA ligase/mRNA capping enzyme"/>
    <property type="match status" value="1"/>
</dbReference>
<dbReference type="Gene3D" id="1.10.287.610">
    <property type="entry name" value="Helix hairpin bin"/>
    <property type="match status" value="1"/>
</dbReference>
<dbReference type="Gene3D" id="2.40.50.140">
    <property type="entry name" value="Nucleic acid-binding proteins"/>
    <property type="match status" value="1"/>
</dbReference>
<dbReference type="HAMAP" id="MF_01588">
    <property type="entry name" value="DNA_ligase_A"/>
    <property type="match status" value="1"/>
</dbReference>
<dbReference type="InterPro" id="IPR001357">
    <property type="entry name" value="BRCT_dom"/>
</dbReference>
<dbReference type="InterPro" id="IPR036420">
    <property type="entry name" value="BRCT_dom_sf"/>
</dbReference>
<dbReference type="InterPro" id="IPR041663">
    <property type="entry name" value="DisA/LigA_HHH"/>
</dbReference>
<dbReference type="InterPro" id="IPR001679">
    <property type="entry name" value="DNA_ligase"/>
</dbReference>
<dbReference type="InterPro" id="IPR018239">
    <property type="entry name" value="DNA_ligase_AS"/>
</dbReference>
<dbReference type="InterPro" id="IPR033136">
    <property type="entry name" value="DNA_ligase_CS"/>
</dbReference>
<dbReference type="InterPro" id="IPR013839">
    <property type="entry name" value="DNAligase_adenylation"/>
</dbReference>
<dbReference type="InterPro" id="IPR013840">
    <property type="entry name" value="DNAligase_N"/>
</dbReference>
<dbReference type="InterPro" id="IPR003583">
    <property type="entry name" value="Hlx-hairpin-Hlx_DNA-bd_motif"/>
</dbReference>
<dbReference type="InterPro" id="IPR012340">
    <property type="entry name" value="NA-bd_OB-fold"/>
</dbReference>
<dbReference type="InterPro" id="IPR004150">
    <property type="entry name" value="NAD_DNA_ligase_OB"/>
</dbReference>
<dbReference type="InterPro" id="IPR010994">
    <property type="entry name" value="RuvA_2-like"/>
</dbReference>
<dbReference type="InterPro" id="IPR004149">
    <property type="entry name" value="Znf_DNAligase_C4"/>
</dbReference>
<dbReference type="NCBIfam" id="TIGR00575">
    <property type="entry name" value="dnlj"/>
    <property type="match status" value="1"/>
</dbReference>
<dbReference type="NCBIfam" id="NF005932">
    <property type="entry name" value="PRK07956.1"/>
    <property type="match status" value="1"/>
</dbReference>
<dbReference type="PANTHER" id="PTHR23389">
    <property type="entry name" value="CHROMOSOME TRANSMISSION FIDELITY FACTOR 18"/>
    <property type="match status" value="1"/>
</dbReference>
<dbReference type="PANTHER" id="PTHR23389:SF9">
    <property type="entry name" value="DNA LIGASE"/>
    <property type="match status" value="1"/>
</dbReference>
<dbReference type="Pfam" id="PF00533">
    <property type="entry name" value="BRCT"/>
    <property type="match status" value="1"/>
</dbReference>
<dbReference type="Pfam" id="PF01653">
    <property type="entry name" value="DNA_ligase_aden"/>
    <property type="match status" value="1"/>
</dbReference>
<dbReference type="Pfam" id="PF03120">
    <property type="entry name" value="DNA_ligase_OB"/>
    <property type="match status" value="1"/>
</dbReference>
<dbReference type="Pfam" id="PF03119">
    <property type="entry name" value="DNA_ligase_ZBD"/>
    <property type="match status" value="1"/>
</dbReference>
<dbReference type="Pfam" id="PF12826">
    <property type="entry name" value="HHH_2"/>
    <property type="match status" value="1"/>
</dbReference>
<dbReference type="Pfam" id="PF14520">
    <property type="entry name" value="HHH_5"/>
    <property type="match status" value="1"/>
</dbReference>
<dbReference type="PIRSF" id="PIRSF001604">
    <property type="entry name" value="LigA"/>
    <property type="match status" value="1"/>
</dbReference>
<dbReference type="SMART" id="SM00292">
    <property type="entry name" value="BRCT"/>
    <property type="match status" value="1"/>
</dbReference>
<dbReference type="SMART" id="SM00278">
    <property type="entry name" value="HhH1"/>
    <property type="match status" value="3"/>
</dbReference>
<dbReference type="SMART" id="SM00532">
    <property type="entry name" value="LIGANc"/>
    <property type="match status" value="1"/>
</dbReference>
<dbReference type="SUPFAM" id="SSF52113">
    <property type="entry name" value="BRCT domain"/>
    <property type="match status" value="1"/>
</dbReference>
<dbReference type="SUPFAM" id="SSF56091">
    <property type="entry name" value="DNA ligase/mRNA capping enzyme, catalytic domain"/>
    <property type="match status" value="1"/>
</dbReference>
<dbReference type="SUPFAM" id="SSF50249">
    <property type="entry name" value="Nucleic acid-binding proteins"/>
    <property type="match status" value="1"/>
</dbReference>
<dbReference type="SUPFAM" id="SSF47781">
    <property type="entry name" value="RuvA domain 2-like"/>
    <property type="match status" value="1"/>
</dbReference>
<dbReference type="PROSITE" id="PS50172">
    <property type="entry name" value="BRCT"/>
    <property type="match status" value="1"/>
</dbReference>
<dbReference type="PROSITE" id="PS01055">
    <property type="entry name" value="DNA_LIGASE_N1"/>
    <property type="match status" value="1"/>
</dbReference>
<dbReference type="PROSITE" id="PS01056">
    <property type="entry name" value="DNA_LIGASE_N2"/>
    <property type="match status" value="1"/>
</dbReference>